<organism>
    <name type="scientific">Mastigocladus laminosus</name>
    <name type="common">Fischerella sp.</name>
    <dbReference type="NCBI Taxonomy" id="83541"/>
    <lineage>
        <taxon>Bacteria</taxon>
        <taxon>Bacillati</taxon>
        <taxon>Cyanobacteriota</taxon>
        <taxon>Cyanophyceae</taxon>
        <taxon>Nostocales</taxon>
        <taxon>Hapalosiphonaceae</taxon>
        <taxon>Mastigocladus</taxon>
    </lineage>
</organism>
<keyword id="KW-0472">Membrane</keyword>
<keyword id="KW-0602">Photosynthesis</keyword>
<keyword id="KW-0603">Photosystem I</keyword>
<keyword id="KW-0793">Thylakoid</keyword>
<keyword id="KW-0812">Transmembrane</keyword>
<keyword id="KW-1133">Transmembrane helix</keyword>
<feature type="propeptide" id="PRO_0000029400" evidence="1">
    <location>
        <begin position="1"/>
        <end position="4"/>
    </location>
</feature>
<feature type="chain" id="PRO_0000029401" description="Photosystem I reaction center subunit PsaK">
    <location>
        <begin position="5"/>
        <end position="86"/>
    </location>
</feature>
<feature type="transmembrane region" description="Helical" evidence="2">
    <location>
        <begin position="14"/>
        <end position="34"/>
    </location>
</feature>
<feature type="transmembrane region" description="Helical" evidence="2">
    <location>
        <begin position="53"/>
        <end position="73"/>
    </location>
</feature>
<gene>
    <name type="primary">psaK</name>
</gene>
<reference key="1">
    <citation type="submission" date="1999-07" db="EMBL/GenBank/DDBJ databases">
        <title>Molecular cloning of the psaK gene for photosystem I subunit X from the thermophilic cyanobacterium Mastigocladus laminosus.</title>
        <authorList>
            <person name="He Z.Y."/>
            <person name="Chitnis P.R."/>
            <person name="Nechushtai R."/>
        </authorList>
    </citation>
    <scope>NUCLEOTIDE SEQUENCE [GENOMIC DNA]</scope>
</reference>
<proteinExistence type="inferred from homology"/>
<dbReference type="EMBL" id="AF170923">
    <property type="protein sequence ID" value="AAD50998.1"/>
    <property type="molecule type" value="Genomic_DNA"/>
</dbReference>
<dbReference type="SMR" id="Q9S3W9"/>
<dbReference type="GO" id="GO:0009522">
    <property type="term" value="C:photosystem I"/>
    <property type="evidence" value="ECO:0007669"/>
    <property type="project" value="UniProtKB-KW"/>
</dbReference>
<dbReference type="GO" id="GO:0031676">
    <property type="term" value="C:plasma membrane-derived thylakoid membrane"/>
    <property type="evidence" value="ECO:0007669"/>
    <property type="project" value="UniProtKB-SubCell"/>
</dbReference>
<dbReference type="GO" id="GO:0015979">
    <property type="term" value="P:photosynthesis"/>
    <property type="evidence" value="ECO:0007669"/>
    <property type="project" value="UniProtKB-UniRule"/>
</dbReference>
<dbReference type="Gene3D" id="1.20.860.20">
    <property type="entry name" value="Photosystem I PsaK, reaction centre"/>
    <property type="match status" value="1"/>
</dbReference>
<dbReference type="HAMAP" id="MF_00474">
    <property type="entry name" value="PSI_PsaK"/>
    <property type="match status" value="1"/>
</dbReference>
<dbReference type="InterPro" id="IPR035982">
    <property type="entry name" value="PSI_centre_PsaK_sf"/>
</dbReference>
<dbReference type="InterPro" id="IPR000549">
    <property type="entry name" value="PSI_PsaG/PsaK"/>
</dbReference>
<dbReference type="InterPro" id="IPR017492">
    <property type="entry name" value="PSI_PsaK"/>
</dbReference>
<dbReference type="InterPro" id="IPR037101">
    <property type="entry name" value="PSI_PsaK_bact"/>
</dbReference>
<dbReference type="NCBIfam" id="TIGR03049">
    <property type="entry name" value="PS_I_psaK"/>
    <property type="match status" value="1"/>
</dbReference>
<dbReference type="Pfam" id="PF01241">
    <property type="entry name" value="PSI_PSAK"/>
    <property type="match status" value="1"/>
</dbReference>
<dbReference type="SUPFAM" id="SSF81563">
    <property type="entry name" value="Photosystem I reaction center subunit X, PsaK"/>
    <property type="match status" value="1"/>
</dbReference>
<dbReference type="PROSITE" id="PS01026">
    <property type="entry name" value="PHOTOSYSTEM_I_PSAGK"/>
    <property type="match status" value="1"/>
</dbReference>
<sequence>MLTSTLLAAATTPLQWSPTVGIIMILCNIVAIAFGKSTIQYPNAGPALPSSQFFGGFGLPALLATTAFGHILGTGVILGLHNLGRF</sequence>
<evidence type="ECO:0000250" key="1"/>
<evidence type="ECO:0000255" key="2"/>
<evidence type="ECO:0000305" key="3"/>
<comment type="subcellular location">
    <subcellularLocation>
        <location evidence="1">Cellular thylakoid membrane</location>
        <topology evidence="1">Multi-pass membrane protein</topology>
    </subcellularLocation>
</comment>
<comment type="similarity">
    <text evidence="3">Belongs to the PsaG/PsaK family.</text>
</comment>
<name>PSAK_MASLA</name>
<protein>
    <recommendedName>
        <fullName>Photosystem I reaction center subunit PsaK</fullName>
    </recommendedName>
    <alternativeName>
        <fullName>Photosystem I subunit X</fullName>
    </alternativeName>
</protein>
<accession>Q9S3W9</accession>